<gene>
    <name type="ordered locus">stu1959</name>
</gene>
<organism>
    <name type="scientific">Streptococcus thermophilus (strain ATCC BAA-250 / LMG 18311)</name>
    <dbReference type="NCBI Taxonomy" id="264199"/>
    <lineage>
        <taxon>Bacteria</taxon>
        <taxon>Bacillati</taxon>
        <taxon>Bacillota</taxon>
        <taxon>Bacilli</taxon>
        <taxon>Lactobacillales</taxon>
        <taxon>Streptococcaceae</taxon>
        <taxon>Streptococcus</taxon>
    </lineage>
</organism>
<dbReference type="EMBL" id="CP000023">
    <property type="protein sequence ID" value="AAV61553.1"/>
    <property type="molecule type" value="Genomic_DNA"/>
</dbReference>
<dbReference type="RefSeq" id="WP_002952186.1">
    <property type="nucleotide sequence ID" value="NC_006448.1"/>
</dbReference>
<dbReference type="SMR" id="Q5M293"/>
<dbReference type="STRING" id="264199.stu1959"/>
<dbReference type="KEGG" id="stl:stu1959"/>
<dbReference type="eggNOG" id="COG4472">
    <property type="taxonomic scope" value="Bacteria"/>
</dbReference>
<dbReference type="HOGENOM" id="CLU_162466_0_0_9"/>
<dbReference type="Proteomes" id="UP000001170">
    <property type="component" value="Chromosome"/>
</dbReference>
<dbReference type="HAMAP" id="MF_01507">
    <property type="entry name" value="UPF0297"/>
    <property type="match status" value="1"/>
</dbReference>
<dbReference type="InterPro" id="IPR009309">
    <property type="entry name" value="IreB"/>
</dbReference>
<dbReference type="NCBIfam" id="NF003997">
    <property type="entry name" value="PRK05473.1"/>
    <property type="match status" value="1"/>
</dbReference>
<dbReference type="PANTHER" id="PTHR40067">
    <property type="entry name" value="UPF0297 PROTEIN YRZL"/>
    <property type="match status" value="1"/>
</dbReference>
<dbReference type="PANTHER" id="PTHR40067:SF1">
    <property type="entry name" value="UPF0297 PROTEIN YRZL"/>
    <property type="match status" value="1"/>
</dbReference>
<dbReference type="Pfam" id="PF06135">
    <property type="entry name" value="IreB"/>
    <property type="match status" value="1"/>
</dbReference>
<dbReference type="PIRSF" id="PIRSF037258">
    <property type="entry name" value="DUF965_bac"/>
    <property type="match status" value="1"/>
</dbReference>
<protein>
    <recommendedName>
        <fullName evidence="1">UPF0297 protein stu1959</fullName>
    </recommendedName>
</protein>
<evidence type="ECO:0000255" key="1">
    <source>
        <dbReference type="HAMAP-Rule" id="MF_01507"/>
    </source>
</evidence>
<reference key="1">
    <citation type="journal article" date="2004" name="Nat. Biotechnol.">
        <title>Complete sequence and comparative genome analysis of the dairy bacterium Streptococcus thermophilus.</title>
        <authorList>
            <person name="Bolotin A."/>
            <person name="Quinquis B."/>
            <person name="Renault P."/>
            <person name="Sorokin A."/>
            <person name="Ehrlich S.D."/>
            <person name="Kulakauskas S."/>
            <person name="Lapidus A."/>
            <person name="Goltsman E."/>
            <person name="Mazur M."/>
            <person name="Pusch G.D."/>
            <person name="Fonstein M."/>
            <person name="Overbeek R."/>
            <person name="Kyprides N."/>
            <person name="Purnelle B."/>
            <person name="Prozzi D."/>
            <person name="Ngui K."/>
            <person name="Masuy D."/>
            <person name="Hancy F."/>
            <person name="Burteau S."/>
            <person name="Boutry M."/>
            <person name="Delcour J."/>
            <person name="Goffeau A."/>
            <person name="Hols P."/>
        </authorList>
    </citation>
    <scope>NUCLEOTIDE SEQUENCE [LARGE SCALE GENOMIC DNA]</scope>
    <source>
        <strain>ATCC BAA-250 / LMG 18311</strain>
    </source>
</reference>
<name>Y1959_STRT2</name>
<keyword id="KW-1185">Reference proteome</keyword>
<accession>Q5M293</accession>
<comment type="similarity">
    <text evidence="1">Belongs to the UPF0297 family.</text>
</comment>
<sequence>MGFTDETVRFNLNDGDKDEISNTLTNVYRSLAEKGYNPINQIVGYVLSGDPAYVPRYNDARNQIRKYERDEIVEELVRYYLKGNGTDL</sequence>
<proteinExistence type="inferred from homology"/>
<feature type="chain" id="PRO_0000216997" description="UPF0297 protein stu1959">
    <location>
        <begin position="1"/>
        <end position="88"/>
    </location>
</feature>